<evidence type="ECO:0000250" key="1"/>
<evidence type="ECO:0000269" key="2">
    <source>
    </source>
</evidence>
<evidence type="ECO:0000305" key="3"/>
<protein>
    <recommendedName>
        <fullName>Gamma-cadinene synthase</fullName>
        <ecNumber>4.2.3.92</ecNumber>
    </recommendedName>
    <alternativeName>
        <fullName>(+)-gamma-cadinene synthase</fullName>
    </alternativeName>
</protein>
<sequence length="540" mass="63566">MDVSILRDVRPPVTSYAPNIWADTFSNISLDEEVQKKYAETIEALKQVVRGMLMAAATPIKQMIFIDTLERLGLAYHFETEIEHKLQKIYDDNVCGDDCDLFTTALRFRLLRQHRHHVSCDVFDKFLYEEGKFKGDAEGLLSLYEASHVRFHNEKILEEAERFTRQELSCWIKLQSPLKDKVKRALERPLHREVPILYARHFISIYEKDESMDEHLLKLAKFNFNFLQNLYKKELYDLSRWWNKFDLKTKLPYIRDRLAEAYLWGVGYHFEPQYSYVRKGVVLSIKIIGILDDTYDNYATVNEAQLFTEILDRWSMDEIDRLPDYMKIVLHFVMSAYEEYERDAKIVYGKKFASPYFKETIQQLARGYNQELKWVMEKQMPPFKDYLKNSEITSCIYIMFASIIPGLKSFTQEAIDWIKNEPNFAVKAGLIGRYWDDIGSHKRESKGGEMLTVMDCYMKQYSVSIQETISEFAKAVEDSWKEVNEGWVYTISMSKEITVQFLNYSRMCDASYNRNNGDGYTDPSFAKSNITALFVDPIII</sequence>
<reference key="1">
    <citation type="journal article" date="2004" name="Plant Physiol.">
        <title>The biochemical and molecular basis for the divergent patterns in the biosynthesis of terpenes and phenylpropenes in the peltate glands of three cultivars of basil.</title>
        <authorList>
            <person name="Iijima Y."/>
            <person name="Davidovich-Rikanati R."/>
            <person name="Fridman E."/>
            <person name="Gang D.R."/>
            <person name="Bar E."/>
            <person name="Lewinsohn E."/>
            <person name="Pichersky E."/>
        </authorList>
    </citation>
    <scope>NUCLEOTIDE SEQUENCE [MRNA]</scope>
    <scope>FUNCTION</scope>
    <scope>CATALYTIC ACTIVITY</scope>
</reference>
<comment type="function">
    <text evidence="2">Sesquiterpene synthase that catalyzes the cyclization of trans,trans-farnesyl diphosphate (FPP) to gamma cadinene.</text>
</comment>
<comment type="catalytic activity">
    <reaction evidence="2">
        <text>(2E,6E)-farnesyl diphosphate = (+)-gamma-cadinene + diphosphate</text>
        <dbReference type="Rhea" id="RHEA:31827"/>
        <dbReference type="ChEBI" id="CHEBI:33019"/>
        <dbReference type="ChEBI" id="CHEBI:63205"/>
        <dbReference type="ChEBI" id="CHEBI:175763"/>
        <dbReference type="EC" id="4.2.3.92"/>
    </reaction>
</comment>
<comment type="cofactor">
    <cofactor evidence="1">
        <name>Mg(2+)</name>
        <dbReference type="ChEBI" id="CHEBI:18420"/>
    </cofactor>
    <cofactor evidence="1">
        <name>Mn(2+)</name>
        <dbReference type="ChEBI" id="CHEBI:29035"/>
    </cofactor>
    <text evidence="1">Binds 3 Mg(2+) or Mn(2+) ions per subunit.</text>
</comment>
<comment type="pathway">
    <text>Secondary metabolite biosynthesis; terpenoid biosynthesis.</text>
</comment>
<comment type="domain">
    <text>The Asp-Asp-Xaa-Xaa-Asp/Glu (DDXXD/E) motif is important for the catalytic activity, presumably through binding to Mg(2+).</text>
</comment>
<comment type="similarity">
    <text evidence="3">Belongs to the terpene synthase family.</text>
</comment>
<accession>Q5SBP5</accession>
<keyword id="KW-0456">Lyase</keyword>
<keyword id="KW-0460">Magnesium</keyword>
<keyword id="KW-0479">Metal-binding</keyword>
<gene>
    <name type="primary">CDS</name>
</gene>
<proteinExistence type="evidence at protein level"/>
<organism>
    <name type="scientific">Ocimum basilicum</name>
    <name type="common">Sweet basil</name>
    <dbReference type="NCBI Taxonomy" id="39350"/>
    <lineage>
        <taxon>Eukaryota</taxon>
        <taxon>Viridiplantae</taxon>
        <taxon>Streptophyta</taxon>
        <taxon>Embryophyta</taxon>
        <taxon>Tracheophyta</taxon>
        <taxon>Spermatophyta</taxon>
        <taxon>Magnoliopsida</taxon>
        <taxon>eudicotyledons</taxon>
        <taxon>Gunneridae</taxon>
        <taxon>Pentapetalae</taxon>
        <taxon>asterids</taxon>
        <taxon>lamiids</taxon>
        <taxon>Lamiales</taxon>
        <taxon>Lamiaceae</taxon>
        <taxon>Nepetoideae</taxon>
        <taxon>Ocimeae</taxon>
        <taxon>Ociminae</taxon>
        <taxon>Ocimum</taxon>
    </lineage>
</organism>
<feature type="chain" id="PRO_0000399250" description="Gamma-cadinene synthase">
    <location>
        <begin position="1"/>
        <end position="540"/>
    </location>
</feature>
<feature type="short sequence motif" description="DDXXD motif">
    <location>
        <begin position="292"/>
        <end position="296"/>
    </location>
</feature>
<feature type="binding site" evidence="1">
    <location>
        <position position="292"/>
    </location>
    <ligand>
        <name>Mg(2+)</name>
        <dbReference type="ChEBI" id="CHEBI:18420"/>
        <label>1</label>
    </ligand>
</feature>
<feature type="binding site" evidence="1">
    <location>
        <position position="292"/>
    </location>
    <ligand>
        <name>Mg(2+)</name>
        <dbReference type="ChEBI" id="CHEBI:18420"/>
        <label>2</label>
    </ligand>
</feature>
<feature type="binding site" evidence="1">
    <location>
        <position position="296"/>
    </location>
    <ligand>
        <name>Mg(2+)</name>
        <dbReference type="ChEBI" id="CHEBI:18420"/>
        <label>1</label>
    </ligand>
</feature>
<feature type="binding site" evidence="1">
    <location>
        <position position="296"/>
    </location>
    <ligand>
        <name>Mg(2+)</name>
        <dbReference type="ChEBI" id="CHEBI:18420"/>
        <label>2</label>
    </ligand>
</feature>
<feature type="binding site" evidence="1">
    <location>
        <position position="436"/>
    </location>
    <ligand>
        <name>Mg(2+)</name>
        <dbReference type="ChEBI" id="CHEBI:18420"/>
        <label>3</label>
    </ligand>
</feature>
<feature type="binding site" evidence="1">
    <location>
        <position position="440"/>
    </location>
    <ligand>
        <name>Mg(2+)</name>
        <dbReference type="ChEBI" id="CHEBI:18420"/>
        <label>3</label>
    </ligand>
</feature>
<feature type="binding site" evidence="1">
    <location>
        <position position="444"/>
    </location>
    <ligand>
        <name>Mg(2+)</name>
        <dbReference type="ChEBI" id="CHEBI:18420"/>
        <label>3</label>
    </ligand>
</feature>
<name>GCS1_OCIBA</name>
<dbReference type="EC" id="4.2.3.92"/>
<dbReference type="EMBL" id="AY693645">
    <property type="protein sequence ID" value="AAV63787.1"/>
    <property type="molecule type" value="mRNA"/>
</dbReference>
<dbReference type="SMR" id="Q5SBP5"/>
<dbReference type="KEGG" id="ag:AAV63787"/>
<dbReference type="UniPathway" id="UPA00213"/>
<dbReference type="GO" id="GO:0000287">
    <property type="term" value="F:magnesium ion binding"/>
    <property type="evidence" value="ECO:0007669"/>
    <property type="project" value="InterPro"/>
</dbReference>
<dbReference type="GO" id="GO:0010333">
    <property type="term" value="F:terpene synthase activity"/>
    <property type="evidence" value="ECO:0007669"/>
    <property type="project" value="InterPro"/>
</dbReference>
<dbReference type="GO" id="GO:0016102">
    <property type="term" value="P:diterpenoid biosynthetic process"/>
    <property type="evidence" value="ECO:0007669"/>
    <property type="project" value="InterPro"/>
</dbReference>
<dbReference type="CDD" id="cd00684">
    <property type="entry name" value="Terpene_cyclase_plant_C1"/>
    <property type="match status" value="1"/>
</dbReference>
<dbReference type="FunFam" id="1.10.600.10:FF:000007">
    <property type="entry name" value="Isoprene synthase, chloroplastic"/>
    <property type="match status" value="1"/>
</dbReference>
<dbReference type="FunFam" id="1.50.10.130:FF:000001">
    <property type="entry name" value="Isoprene synthase, chloroplastic"/>
    <property type="match status" value="1"/>
</dbReference>
<dbReference type="Gene3D" id="1.10.600.10">
    <property type="entry name" value="Farnesyl Diphosphate Synthase"/>
    <property type="match status" value="1"/>
</dbReference>
<dbReference type="Gene3D" id="1.50.10.130">
    <property type="entry name" value="Terpene synthase, N-terminal domain"/>
    <property type="match status" value="1"/>
</dbReference>
<dbReference type="InterPro" id="IPR008949">
    <property type="entry name" value="Isoprenoid_synthase_dom_sf"/>
</dbReference>
<dbReference type="InterPro" id="IPR034741">
    <property type="entry name" value="Terpene_cyclase-like_1_C"/>
</dbReference>
<dbReference type="InterPro" id="IPR044814">
    <property type="entry name" value="Terpene_cyclase_plant_C1"/>
</dbReference>
<dbReference type="InterPro" id="IPR001906">
    <property type="entry name" value="Terpene_synth_N"/>
</dbReference>
<dbReference type="InterPro" id="IPR036965">
    <property type="entry name" value="Terpene_synth_N_sf"/>
</dbReference>
<dbReference type="InterPro" id="IPR050148">
    <property type="entry name" value="Terpene_synthase-like"/>
</dbReference>
<dbReference type="InterPro" id="IPR005630">
    <property type="entry name" value="Terpene_synthase_metal-bd"/>
</dbReference>
<dbReference type="InterPro" id="IPR008930">
    <property type="entry name" value="Terpenoid_cyclase/PrenylTrfase"/>
</dbReference>
<dbReference type="PANTHER" id="PTHR31225">
    <property type="entry name" value="OS04G0344100 PROTEIN-RELATED"/>
    <property type="match status" value="1"/>
</dbReference>
<dbReference type="PANTHER" id="PTHR31225:SF253">
    <property type="entry name" value="SESQUITERPENE SYNTHASE 31"/>
    <property type="match status" value="1"/>
</dbReference>
<dbReference type="Pfam" id="PF01397">
    <property type="entry name" value="Terpene_synth"/>
    <property type="match status" value="1"/>
</dbReference>
<dbReference type="Pfam" id="PF03936">
    <property type="entry name" value="Terpene_synth_C"/>
    <property type="match status" value="1"/>
</dbReference>
<dbReference type="SFLD" id="SFLDS00005">
    <property type="entry name" value="Isoprenoid_Synthase_Type_I"/>
    <property type="match status" value="1"/>
</dbReference>
<dbReference type="SFLD" id="SFLDG01019">
    <property type="entry name" value="Terpene_Cyclase_Like_1_C_Termi"/>
    <property type="match status" value="1"/>
</dbReference>
<dbReference type="SUPFAM" id="SSF48239">
    <property type="entry name" value="Terpenoid cyclases/Protein prenyltransferases"/>
    <property type="match status" value="1"/>
</dbReference>
<dbReference type="SUPFAM" id="SSF48576">
    <property type="entry name" value="Terpenoid synthases"/>
    <property type="match status" value="1"/>
</dbReference>